<accession>Q70UT9</accession>
<gene>
    <name type="primary">MT-ND4L</name>
    <name type="synonym">MTND4L</name>
    <name type="synonym">NADH4L</name>
    <name type="synonym">ND4L</name>
</gene>
<sequence>MSITTLNIMVAFMMALLGMFVYRSHLMSSLLCLEGMMLSLFMLATIVSLNMNFTISFMFPVILLVFAACEAAVGLALLIMVSNTYGMDYIHNLNLLQC</sequence>
<protein>
    <recommendedName>
        <fullName>NADH-ubiquinone oxidoreductase chain 4L</fullName>
        <ecNumber>7.1.1.2</ecNumber>
    </recommendedName>
    <alternativeName>
        <fullName>NADH dehydrogenase subunit 4L</fullName>
    </alternativeName>
</protein>
<keyword id="KW-0249">Electron transport</keyword>
<keyword id="KW-0472">Membrane</keyword>
<keyword id="KW-0496">Mitochondrion</keyword>
<keyword id="KW-0999">Mitochondrion inner membrane</keyword>
<keyword id="KW-0520">NAD</keyword>
<keyword id="KW-0679">Respiratory chain</keyword>
<keyword id="KW-1278">Translocase</keyword>
<keyword id="KW-0812">Transmembrane</keyword>
<keyword id="KW-1133">Transmembrane helix</keyword>
<keyword id="KW-0813">Transport</keyword>
<keyword id="KW-0830">Ubiquinone</keyword>
<reference key="1">
    <citation type="submission" date="2003-01" db="EMBL/GenBank/DDBJ databases">
        <title>The mitochondrial genome of the lagomorph Ochotona princeps.</title>
        <authorList>
            <person name="Gissi C."/>
            <person name="Pesole G."/>
        </authorList>
    </citation>
    <scope>NUCLEOTIDE SEQUENCE [GENOMIC DNA]</scope>
</reference>
<feature type="chain" id="PRO_0000275079" description="NADH-ubiquinone oxidoreductase chain 4L">
    <location>
        <begin position="1"/>
        <end position="98"/>
    </location>
</feature>
<feature type="transmembrane region" description="Helical" evidence="3">
    <location>
        <begin position="1"/>
        <end position="21"/>
    </location>
</feature>
<feature type="transmembrane region" description="Helical" evidence="3">
    <location>
        <begin position="29"/>
        <end position="49"/>
    </location>
</feature>
<feature type="transmembrane region" description="Helical" evidence="3">
    <location>
        <begin position="61"/>
        <end position="81"/>
    </location>
</feature>
<proteinExistence type="inferred from homology"/>
<organism>
    <name type="scientific">Ochotona princeps</name>
    <name type="common">Southern American pika</name>
    <dbReference type="NCBI Taxonomy" id="9978"/>
    <lineage>
        <taxon>Eukaryota</taxon>
        <taxon>Metazoa</taxon>
        <taxon>Chordata</taxon>
        <taxon>Craniata</taxon>
        <taxon>Vertebrata</taxon>
        <taxon>Euteleostomi</taxon>
        <taxon>Mammalia</taxon>
        <taxon>Eutheria</taxon>
        <taxon>Euarchontoglires</taxon>
        <taxon>Glires</taxon>
        <taxon>Lagomorpha</taxon>
        <taxon>Ochotonidae</taxon>
        <taxon>Ochotona</taxon>
    </lineage>
</organism>
<evidence type="ECO:0000250" key="1">
    <source>
        <dbReference type="UniProtKB" id="P03901"/>
    </source>
</evidence>
<evidence type="ECO:0000250" key="2">
    <source>
        <dbReference type="UniProtKB" id="P03902"/>
    </source>
</evidence>
<evidence type="ECO:0000255" key="3"/>
<evidence type="ECO:0000305" key="4"/>
<comment type="function">
    <text evidence="1">Core subunit of the mitochondrial membrane respiratory chain NADH dehydrogenase (Complex I) which catalyzes electron transfer from NADH through the respiratory chain, using ubiquinone as an electron acceptor. Part of the enzyme membrane arm which is embedded in the lipid bilayer and involved in proton translocation.</text>
</comment>
<comment type="catalytic activity">
    <reaction evidence="1">
        <text>a ubiquinone + NADH + 5 H(+)(in) = a ubiquinol + NAD(+) + 4 H(+)(out)</text>
        <dbReference type="Rhea" id="RHEA:29091"/>
        <dbReference type="Rhea" id="RHEA-COMP:9565"/>
        <dbReference type="Rhea" id="RHEA-COMP:9566"/>
        <dbReference type="ChEBI" id="CHEBI:15378"/>
        <dbReference type="ChEBI" id="CHEBI:16389"/>
        <dbReference type="ChEBI" id="CHEBI:17976"/>
        <dbReference type="ChEBI" id="CHEBI:57540"/>
        <dbReference type="ChEBI" id="CHEBI:57945"/>
        <dbReference type="EC" id="7.1.1.2"/>
    </reaction>
    <physiologicalReaction direction="left-to-right" evidence="1">
        <dbReference type="Rhea" id="RHEA:29092"/>
    </physiologicalReaction>
</comment>
<comment type="subunit">
    <text evidence="2">Core subunit of respiratory chain NADH dehydrogenase (Complex I) which is composed of 45 different subunits.</text>
</comment>
<comment type="subcellular location">
    <subcellularLocation>
        <location evidence="2">Mitochondrion inner membrane</location>
        <topology evidence="3">Multi-pass membrane protein</topology>
    </subcellularLocation>
</comment>
<comment type="similarity">
    <text evidence="4">Belongs to the complex I subunit 4L family.</text>
</comment>
<name>NU4LM_OCHPR</name>
<dbReference type="EC" id="7.1.1.2"/>
<dbReference type="EMBL" id="AJ537415">
    <property type="protein sequence ID" value="CAD60955.1"/>
    <property type="molecule type" value="Genomic_DNA"/>
</dbReference>
<dbReference type="RefSeq" id="NP_958773.1">
    <property type="nucleotide sequence ID" value="NC_005358.1"/>
</dbReference>
<dbReference type="SMR" id="Q70UT9"/>
<dbReference type="Ensembl" id="ENSOPRT00000024291">
    <property type="protein sequence ID" value="ENSOPRP00000016379"/>
    <property type="gene ID" value="ENSOPRG00000024315"/>
</dbReference>
<dbReference type="GeneID" id="2717283"/>
<dbReference type="KEGG" id="opi:2717283"/>
<dbReference type="CTD" id="4539"/>
<dbReference type="HOGENOM" id="CLU_182394_0_0_1"/>
<dbReference type="GO" id="GO:0005743">
    <property type="term" value="C:mitochondrial inner membrane"/>
    <property type="evidence" value="ECO:0000250"/>
    <property type="project" value="UniProtKB"/>
</dbReference>
<dbReference type="GO" id="GO:0045271">
    <property type="term" value="C:respiratory chain complex I"/>
    <property type="evidence" value="ECO:0000250"/>
    <property type="project" value="UniProtKB"/>
</dbReference>
<dbReference type="GO" id="GO:0008137">
    <property type="term" value="F:NADH dehydrogenase (ubiquinone) activity"/>
    <property type="evidence" value="ECO:0000250"/>
    <property type="project" value="UniProtKB"/>
</dbReference>
<dbReference type="GO" id="GO:0042773">
    <property type="term" value="P:ATP synthesis coupled electron transport"/>
    <property type="evidence" value="ECO:0007669"/>
    <property type="project" value="InterPro"/>
</dbReference>
<dbReference type="FunFam" id="1.10.287.3510:FF:000002">
    <property type="entry name" value="NADH-ubiquinone oxidoreductase chain 4L"/>
    <property type="match status" value="1"/>
</dbReference>
<dbReference type="Gene3D" id="1.10.287.3510">
    <property type="match status" value="1"/>
</dbReference>
<dbReference type="InterPro" id="IPR001133">
    <property type="entry name" value="NADH_UbQ_OxRdtase_chain4L/K"/>
</dbReference>
<dbReference type="InterPro" id="IPR039428">
    <property type="entry name" value="NUOK/Mnh_C1-like"/>
</dbReference>
<dbReference type="PANTHER" id="PTHR11434:SF0">
    <property type="entry name" value="NADH-UBIQUINONE OXIDOREDUCTASE CHAIN 4L"/>
    <property type="match status" value="1"/>
</dbReference>
<dbReference type="PANTHER" id="PTHR11434">
    <property type="entry name" value="NADH-UBIQUINONE OXIDOREDUCTASE SUBUNIT ND4L"/>
    <property type="match status" value="1"/>
</dbReference>
<dbReference type="Pfam" id="PF00420">
    <property type="entry name" value="Oxidored_q2"/>
    <property type="match status" value="1"/>
</dbReference>
<geneLocation type="mitochondrion"/>